<reference key="1">
    <citation type="journal article" date="2004" name="Nature">
        <title>Genome evolution in yeasts.</title>
        <authorList>
            <person name="Dujon B."/>
            <person name="Sherman D."/>
            <person name="Fischer G."/>
            <person name="Durrens P."/>
            <person name="Casaregola S."/>
            <person name="Lafontaine I."/>
            <person name="de Montigny J."/>
            <person name="Marck C."/>
            <person name="Neuveglise C."/>
            <person name="Talla E."/>
            <person name="Goffard N."/>
            <person name="Frangeul L."/>
            <person name="Aigle M."/>
            <person name="Anthouard V."/>
            <person name="Babour A."/>
            <person name="Barbe V."/>
            <person name="Barnay S."/>
            <person name="Blanchin S."/>
            <person name="Beckerich J.-M."/>
            <person name="Beyne E."/>
            <person name="Bleykasten C."/>
            <person name="Boisrame A."/>
            <person name="Boyer J."/>
            <person name="Cattolico L."/>
            <person name="Confanioleri F."/>
            <person name="de Daruvar A."/>
            <person name="Despons L."/>
            <person name="Fabre E."/>
            <person name="Fairhead C."/>
            <person name="Ferry-Dumazet H."/>
            <person name="Groppi A."/>
            <person name="Hantraye F."/>
            <person name="Hennequin C."/>
            <person name="Jauniaux N."/>
            <person name="Joyet P."/>
            <person name="Kachouri R."/>
            <person name="Kerrest A."/>
            <person name="Koszul R."/>
            <person name="Lemaire M."/>
            <person name="Lesur I."/>
            <person name="Ma L."/>
            <person name="Muller H."/>
            <person name="Nicaud J.-M."/>
            <person name="Nikolski M."/>
            <person name="Oztas S."/>
            <person name="Ozier-Kalogeropoulos O."/>
            <person name="Pellenz S."/>
            <person name="Potier S."/>
            <person name="Richard G.-F."/>
            <person name="Straub M.-L."/>
            <person name="Suleau A."/>
            <person name="Swennen D."/>
            <person name="Tekaia F."/>
            <person name="Wesolowski-Louvel M."/>
            <person name="Westhof E."/>
            <person name="Wirth B."/>
            <person name="Zeniou-Meyer M."/>
            <person name="Zivanovic Y."/>
            <person name="Bolotin-Fukuhara M."/>
            <person name="Thierry A."/>
            <person name="Bouchier C."/>
            <person name="Caudron B."/>
            <person name="Scarpelli C."/>
            <person name="Gaillardin C."/>
            <person name="Weissenbach J."/>
            <person name="Wincker P."/>
            <person name="Souciet J.-L."/>
        </authorList>
    </citation>
    <scope>NUCLEOTIDE SEQUENCE [LARGE SCALE GENOMIC DNA]</scope>
    <source>
        <strain>CLIB 122 / E 150</strain>
    </source>
</reference>
<dbReference type="EC" id="6.3.1.2"/>
<dbReference type="EMBL" id="CR382132">
    <property type="protein sequence ID" value="CAG77624.1"/>
    <property type="molecule type" value="Genomic_DNA"/>
</dbReference>
<dbReference type="RefSeq" id="XP_504822.1">
    <property type="nucleotide sequence ID" value="XM_504822.1"/>
</dbReference>
<dbReference type="SMR" id="Q6C3E0"/>
<dbReference type="FunCoup" id="Q6C3E0">
    <property type="interactions" value="784"/>
</dbReference>
<dbReference type="STRING" id="284591.Q6C3E0"/>
<dbReference type="EnsemblFungi" id="CAG77624">
    <property type="protein sequence ID" value="CAG77624"/>
    <property type="gene ID" value="YALI0_F00506g"/>
</dbReference>
<dbReference type="VEuPathDB" id="FungiDB:YALI0_F00506g"/>
<dbReference type="HOGENOM" id="CLU_036762_1_1_1"/>
<dbReference type="InParanoid" id="Q6C3E0"/>
<dbReference type="OMA" id="DRRPNAN"/>
<dbReference type="OrthoDB" id="12at4891"/>
<dbReference type="Proteomes" id="UP000001300">
    <property type="component" value="Chromosome F"/>
</dbReference>
<dbReference type="GO" id="GO:0005737">
    <property type="term" value="C:cytoplasm"/>
    <property type="evidence" value="ECO:0000318"/>
    <property type="project" value="GO_Central"/>
</dbReference>
<dbReference type="GO" id="GO:0005524">
    <property type="term" value="F:ATP binding"/>
    <property type="evidence" value="ECO:0007669"/>
    <property type="project" value="UniProtKB-KW"/>
</dbReference>
<dbReference type="GO" id="GO:0004356">
    <property type="term" value="F:glutamine synthetase activity"/>
    <property type="evidence" value="ECO:0000318"/>
    <property type="project" value="GO_Central"/>
</dbReference>
<dbReference type="GO" id="GO:0006542">
    <property type="term" value="P:glutamine biosynthetic process"/>
    <property type="evidence" value="ECO:0000318"/>
    <property type="project" value="GO_Central"/>
</dbReference>
<dbReference type="FunFam" id="3.10.20.70:FF:000004">
    <property type="entry name" value="Glutamine synthetase"/>
    <property type="match status" value="1"/>
</dbReference>
<dbReference type="FunFam" id="3.30.590.10:FF:000004">
    <property type="entry name" value="Glutamine synthetase"/>
    <property type="match status" value="1"/>
</dbReference>
<dbReference type="Gene3D" id="3.10.20.70">
    <property type="entry name" value="Glutamine synthetase, N-terminal domain"/>
    <property type="match status" value="1"/>
</dbReference>
<dbReference type="Gene3D" id="3.30.590.10">
    <property type="entry name" value="Glutamine synthetase/guanido kinase, catalytic domain"/>
    <property type="match status" value="1"/>
</dbReference>
<dbReference type="InterPro" id="IPR008147">
    <property type="entry name" value="Gln_synt_N"/>
</dbReference>
<dbReference type="InterPro" id="IPR036651">
    <property type="entry name" value="Gln_synt_N_sf"/>
</dbReference>
<dbReference type="InterPro" id="IPR014746">
    <property type="entry name" value="Gln_synth/guanido_kin_cat_dom"/>
</dbReference>
<dbReference type="InterPro" id="IPR008146">
    <property type="entry name" value="Gln_synth_cat_dom"/>
</dbReference>
<dbReference type="InterPro" id="IPR027303">
    <property type="entry name" value="Gln_synth_gly_rich_site"/>
</dbReference>
<dbReference type="InterPro" id="IPR027302">
    <property type="entry name" value="Gln_synth_N_conserv_site"/>
</dbReference>
<dbReference type="InterPro" id="IPR050292">
    <property type="entry name" value="Glutamine_Synthetase"/>
</dbReference>
<dbReference type="PANTHER" id="PTHR20852">
    <property type="entry name" value="GLUTAMINE SYNTHETASE"/>
    <property type="match status" value="1"/>
</dbReference>
<dbReference type="PANTHER" id="PTHR20852:SF57">
    <property type="entry name" value="GLUTAMINE SYNTHETASE 2 CYTOPLASMIC"/>
    <property type="match status" value="1"/>
</dbReference>
<dbReference type="Pfam" id="PF00120">
    <property type="entry name" value="Gln-synt_C"/>
    <property type="match status" value="1"/>
</dbReference>
<dbReference type="Pfam" id="PF03951">
    <property type="entry name" value="Gln-synt_N"/>
    <property type="match status" value="1"/>
</dbReference>
<dbReference type="SMART" id="SM01230">
    <property type="entry name" value="Gln-synt_C"/>
    <property type="match status" value="1"/>
</dbReference>
<dbReference type="SUPFAM" id="SSF54368">
    <property type="entry name" value="Glutamine synthetase, N-terminal domain"/>
    <property type="match status" value="1"/>
</dbReference>
<dbReference type="SUPFAM" id="SSF55931">
    <property type="entry name" value="Glutamine synthetase/guanido kinase"/>
    <property type="match status" value="1"/>
</dbReference>
<dbReference type="PROSITE" id="PS00180">
    <property type="entry name" value="GLNA_1"/>
    <property type="match status" value="1"/>
</dbReference>
<dbReference type="PROSITE" id="PS00181">
    <property type="entry name" value="GLNA_ATP"/>
    <property type="match status" value="1"/>
</dbReference>
<dbReference type="PROSITE" id="PS51986">
    <property type="entry name" value="GS_BETA_GRASP"/>
    <property type="match status" value="1"/>
</dbReference>
<dbReference type="PROSITE" id="PS51987">
    <property type="entry name" value="GS_CATALYTIC"/>
    <property type="match status" value="1"/>
</dbReference>
<comment type="catalytic activity">
    <reaction>
        <text>L-glutamate + NH4(+) + ATP = L-glutamine + ADP + phosphate + H(+)</text>
        <dbReference type="Rhea" id="RHEA:16169"/>
        <dbReference type="ChEBI" id="CHEBI:15378"/>
        <dbReference type="ChEBI" id="CHEBI:28938"/>
        <dbReference type="ChEBI" id="CHEBI:29985"/>
        <dbReference type="ChEBI" id="CHEBI:30616"/>
        <dbReference type="ChEBI" id="CHEBI:43474"/>
        <dbReference type="ChEBI" id="CHEBI:58359"/>
        <dbReference type="ChEBI" id="CHEBI:456216"/>
        <dbReference type="EC" id="6.3.1.2"/>
    </reaction>
</comment>
<comment type="subunit">
    <text evidence="1">Homooctamer.</text>
</comment>
<comment type="subcellular location">
    <subcellularLocation>
        <location>Cytoplasm</location>
    </subcellularLocation>
</comment>
<comment type="similarity">
    <text evidence="4">Belongs to the glutamine synthetase family.</text>
</comment>
<gene>
    <name type="primary">GLN1</name>
    <name type="ordered locus">YALI0F00506g</name>
</gene>
<accession>Q6C3E0</accession>
<evidence type="ECO:0000250" key="1"/>
<evidence type="ECO:0000255" key="2">
    <source>
        <dbReference type="PROSITE-ProRule" id="PRU01330"/>
    </source>
</evidence>
<evidence type="ECO:0000255" key="3">
    <source>
        <dbReference type="PROSITE-ProRule" id="PRU01331"/>
    </source>
</evidence>
<evidence type="ECO:0000305" key="4"/>
<name>GLNA_YARLI</name>
<sequence>MVLSKYLDLPQHGAVLAEYIWIDAHFNIRSKCKTLDKKPTSIEDLPEWNFDGSSTDQAPGHDSDIYLRPAAIYPDPFRRGDNIIVLAECWNNDGTPNKFNHRHECAKLMSAHEKEVIWFGIEQEYTMFDESDNPVGWPKGGFPAPQGPYYCGVGTGKVFARDVVEAHYRACLYSGINISGINAEVMPSQWEYQVGPCEGISMADELWMSRYLLHRVAEEFGIKISFHPKPLQGDWNGAGCHTNVSTKSMREPGGMKHIEAAIEKLAARHKEHIAVYGEDNDMRLTGRHETGSIGSFSSGVANRGCSIRIPRSVAKEGYGYFEDRRPASNIDPYLVTGIMTETICGSIPDADMVEETKRGEEEGF</sequence>
<keyword id="KW-0067">ATP-binding</keyword>
<keyword id="KW-0963">Cytoplasm</keyword>
<keyword id="KW-0436">Ligase</keyword>
<keyword id="KW-0547">Nucleotide-binding</keyword>
<keyword id="KW-1185">Reference proteome</keyword>
<proteinExistence type="inferred from homology"/>
<protein>
    <recommendedName>
        <fullName>Glutamine synthetase</fullName>
        <shortName>GS</shortName>
        <ecNumber>6.3.1.2</ecNumber>
    </recommendedName>
    <alternativeName>
        <fullName>Glutamate--ammonia ligase</fullName>
    </alternativeName>
</protein>
<feature type="chain" id="PRO_0000153165" description="Glutamine synthetase">
    <location>
        <begin position="1"/>
        <end position="364"/>
    </location>
</feature>
<feature type="domain" description="GS beta-grasp" evidence="2">
    <location>
        <begin position="15"/>
        <end position="94"/>
    </location>
</feature>
<feature type="domain" description="GS catalytic" evidence="3">
    <location>
        <begin position="101"/>
        <end position="364"/>
    </location>
</feature>
<organism>
    <name type="scientific">Yarrowia lipolytica (strain CLIB 122 / E 150)</name>
    <name type="common">Yeast</name>
    <name type="synonym">Candida lipolytica</name>
    <dbReference type="NCBI Taxonomy" id="284591"/>
    <lineage>
        <taxon>Eukaryota</taxon>
        <taxon>Fungi</taxon>
        <taxon>Dikarya</taxon>
        <taxon>Ascomycota</taxon>
        <taxon>Saccharomycotina</taxon>
        <taxon>Dipodascomycetes</taxon>
        <taxon>Dipodascales</taxon>
        <taxon>Dipodascales incertae sedis</taxon>
        <taxon>Yarrowia</taxon>
    </lineage>
</organism>